<reference key="1">
    <citation type="journal article" date="1992" name="FEMS Microbiol. Lett.">
        <title>Genomic 3' terminal sequence comparison of three isolates of rabbit haemorrhagic disease virus.</title>
        <authorList>
            <person name="Milton I.D."/>
            <person name="Vlasak R."/>
            <person name="Nowotny N."/>
            <person name="Rodak L."/>
            <person name="Carter M.J."/>
        </authorList>
    </citation>
    <scope>NUCLEOTIDE SEQUENCE [GENOMIC RNA]</scope>
</reference>
<evidence type="ECO:0000250" key="1">
    <source>
        <dbReference type="UniProtKB" id="P28711"/>
    </source>
</evidence>
<evidence type="ECO:0000305" key="2"/>
<accession>P27413</accession>
<keyword id="KW-1232">Capsid decoration protein</keyword>
<keyword id="KW-0167">Capsid protein</keyword>
<keyword id="KW-1035">Host cytoplasm</keyword>
<keyword id="KW-0946">Virion</keyword>
<name>VP2_RHDV3</name>
<organismHost>
    <name type="scientific">Oryctolagus cuniculus</name>
    <name type="common">Rabbit</name>
    <dbReference type="NCBI Taxonomy" id="9986"/>
</organismHost>
<organism>
    <name type="scientific">Rabbit hemorrhagic disease virus (strain V-351)</name>
    <name type="common">Ra/LV/RHDV/V351/1991/CK</name>
    <name type="synonym">RHDV-V351</name>
    <dbReference type="NCBI Taxonomy" id="11977"/>
    <lineage>
        <taxon>Viruses</taxon>
        <taxon>Riboviria</taxon>
        <taxon>Orthornavirae</taxon>
        <taxon>Pisuviricota</taxon>
        <taxon>Pisoniviricetes</taxon>
        <taxon>Picornavirales</taxon>
        <taxon>Caliciviridae</taxon>
        <taxon>Lagovirus</taxon>
        <taxon>Rabbit hemorrhagic disease virus</taxon>
    </lineage>
</organism>
<feature type="chain" id="PRO_0000100129" description="Minor capsid protein VP2">
    <location>
        <begin position="1"/>
        <end position="117"/>
    </location>
</feature>
<dbReference type="EMBL" id="Z11535">
    <property type="protein sequence ID" value="CAA77634.1"/>
    <property type="molecule type" value="Genomic_RNA"/>
</dbReference>
<dbReference type="PIR" id="S22135">
    <property type="entry name" value="S22135"/>
</dbReference>
<dbReference type="GO" id="GO:0030430">
    <property type="term" value="C:host cell cytoplasm"/>
    <property type="evidence" value="ECO:0007669"/>
    <property type="project" value="UniProtKB-SubCell"/>
</dbReference>
<dbReference type="GO" id="GO:0098021">
    <property type="term" value="C:viral capsid, decoration"/>
    <property type="evidence" value="ECO:0007669"/>
    <property type="project" value="UniProtKB-KW"/>
</dbReference>
<dbReference type="InterPro" id="IPR008558">
    <property type="entry name" value="VP2_lagovirus"/>
</dbReference>
<dbReference type="Pfam" id="PF05801">
    <property type="entry name" value="VP2_lagovir"/>
    <property type="match status" value="1"/>
</dbReference>
<protein>
    <recommendedName>
        <fullName>Minor capsid protein VP2</fullName>
    </recommendedName>
</protein>
<proteinExistence type="inferred from homology"/>
<sequence length="117" mass="12652">MAFLMSEFIGLGLAGAGVLSNALLRRQELQLQKQALENGLVLKADQLGRLGFNPNEVKNVIVGNSFSSNVRLSNMHNDASVVNAYNVYNPASNGIRKKIKSLNNSVKIYNTTGESSV</sequence>
<comment type="function">
    <text evidence="1">Minor structural protein that forms a portal-like structure at a unique three-fold axis of symmetry, following binding to the host receptor. The channel formed by VP2 may allow the delivery of the viral genome through the host endosomal membrane.</text>
</comment>
<comment type="subunit">
    <text evidence="1">Homooligomer. The portal-like structure consists in 12 copies of VP2. Interacts with capsid protein VP1.</text>
</comment>
<comment type="subcellular location">
    <subcellularLocation>
        <location evidence="1">Virion</location>
    </subcellularLocation>
    <subcellularLocation>
        <location evidence="2">Host cytoplasm</location>
    </subcellularLocation>
</comment>
<comment type="domain">
    <text evidence="1">The N-terminus domain points away from the virion surface.</text>
</comment>
<comment type="miscellaneous">
    <text evidence="1">Translated by a ribosomal termination-reinitiation process from the bicistronic mRNA coding for VP1 and VP2.</text>
</comment>
<comment type="similarity">
    <text evidence="2">Belongs to the lagovirus VP2 protein family.</text>
</comment>
<gene>
    <name type="ORF">ORF2</name>
</gene>